<protein>
    <recommendedName>
        <fullName>Protein HAPLESS 2-B</fullName>
    </recommendedName>
</protein>
<sequence length="714" mass="79763">MAPRRRRRAARSSRPLLLALLAAAVNNFAPAGGVEVLAKSRLESCARGGSDDGRDRLTCDSKIVVDLAVPSGSASLVARVAEVEENGTEAGEMPIRDPLIITINKSEVYALYDLTYLRDVAYKPEEKFVKTRKCEPEAGANVVKSCERLRDEKGSIIEHTEPVCCPCGPHRRVPSSCGNILDKVAKGKANTAHCLRFPDDWFHVFDIGRRSLWFSIRVQVKKGSSESEVIVGPENRTVVSEDSSLRVNLVGDFAGYTSLPSLENFYLVTPRKGVGGGQLEVLGDDFSRWMLLERVLFTLDGLECNKIGVGYEAFRSQPNFCSSPLDSCLGDQLSKFWEIDKNRVNNSQPPQYVVLGKFERINQYPNAGVHTFSVGIPEVLNTNLMIELSADDIEYVYQRSSGKIISINISSFEALSQVGSARVKTKNIGRLEASYSLTFDCLSGINPVEEQYFIMKPDEKLIRTFDLRSSTDQASNYTCQAILKASDFSELDRKESQFSTTATVLNNGTQIGSSENHTKGGIWGFFEAIKAWCAKMWHMLINFFTGTTCSTRCWSFLKFVIHGLLLVAVLWLLHRKGLFDPLYYWWDGVVGSEAQERARRRHKRAHSHRHSHHHDAHKRHKTELAGHRRHHVLHIHDDDDPVAAAAAAEHVILRRHGRHEAALGVQHRDGLKLNKHRRHGGKAVALLPPGEIIVRDGGGCGGVEHGDRRHHAWH</sequence>
<dbReference type="EMBL" id="AP005681">
    <property type="protein sequence ID" value="BAD46352.1"/>
    <property type="status" value="ALT_SEQ"/>
    <property type="molecule type" value="Genomic_DNA"/>
</dbReference>
<dbReference type="EMBL" id="AP005864">
    <property type="protein sequence ID" value="BAD46496.1"/>
    <property type="status" value="ALT_SEQ"/>
    <property type="molecule type" value="Genomic_DNA"/>
</dbReference>
<dbReference type="EMBL" id="AP008215">
    <property type="protein sequence ID" value="BAF25636.1"/>
    <property type="status" value="ALT_SEQ"/>
    <property type="molecule type" value="Genomic_DNA"/>
</dbReference>
<dbReference type="EMBL" id="AP014965">
    <property type="status" value="NOT_ANNOTATED_CDS"/>
    <property type="molecule type" value="Genomic_DNA"/>
</dbReference>
<dbReference type="EMBL" id="CM000146">
    <property type="protein sequence ID" value="EEE70077.1"/>
    <property type="molecule type" value="Genomic_DNA"/>
</dbReference>
<dbReference type="SMR" id="B9G4M9"/>
<dbReference type="STRING" id="39947.B9G4M9"/>
<dbReference type="PaxDb" id="39947-B9G4M9"/>
<dbReference type="EnsemblPlants" id="Os09t0525700-01">
    <property type="protein sequence ID" value="Os09t0525700-01"/>
    <property type="gene ID" value="Os09g0525700"/>
</dbReference>
<dbReference type="Gramene" id="Os09t0525700-01">
    <property type="protein sequence ID" value="Os09t0525700-01"/>
    <property type="gene ID" value="Os09g0525700"/>
</dbReference>
<dbReference type="KEGG" id="dosa:Os09g0525700"/>
<dbReference type="eggNOG" id="ENOG502QREH">
    <property type="taxonomic scope" value="Eukaryota"/>
</dbReference>
<dbReference type="HOGENOM" id="CLU_022353_0_0_1"/>
<dbReference type="InParanoid" id="B9G4M9"/>
<dbReference type="Proteomes" id="UP000000763">
    <property type="component" value="Chromosome 9"/>
</dbReference>
<dbReference type="Proteomes" id="UP000007752">
    <property type="component" value="Chromosome 9"/>
</dbReference>
<dbReference type="Proteomes" id="UP000059680">
    <property type="component" value="Chromosome 9"/>
</dbReference>
<dbReference type="GO" id="GO:0005789">
    <property type="term" value="C:endoplasmic reticulum membrane"/>
    <property type="evidence" value="ECO:0007669"/>
    <property type="project" value="UniProtKB-SubCell"/>
</dbReference>
<dbReference type="GO" id="GO:0005886">
    <property type="term" value="C:plasma membrane"/>
    <property type="evidence" value="ECO:0007669"/>
    <property type="project" value="UniProtKB-SubCell"/>
</dbReference>
<dbReference type="GO" id="GO:0008289">
    <property type="term" value="F:lipid binding"/>
    <property type="evidence" value="ECO:0007669"/>
    <property type="project" value="UniProtKB-KW"/>
</dbReference>
<dbReference type="InterPro" id="IPR040326">
    <property type="entry name" value="HAP2/GCS1"/>
</dbReference>
<dbReference type="InterPro" id="IPR018928">
    <property type="entry name" value="HAP2/GCS1_dom"/>
</dbReference>
<dbReference type="PANTHER" id="PTHR31764:SF0">
    <property type="entry name" value="GENERATIVE CELL SPECIFIC-1_HAP2 DOMAIN-CONTAINING PROTEIN"/>
    <property type="match status" value="1"/>
</dbReference>
<dbReference type="PANTHER" id="PTHR31764">
    <property type="entry name" value="PROTEIN HAPLESS 2"/>
    <property type="match status" value="1"/>
</dbReference>
<dbReference type="Pfam" id="PF10699">
    <property type="entry name" value="HAP2-GCS1"/>
    <property type="match status" value="1"/>
</dbReference>
<keyword id="KW-1003">Cell membrane</keyword>
<keyword id="KW-1015">Disulfide bond</keyword>
<keyword id="KW-0256">Endoplasmic reticulum</keyword>
<keyword id="KW-0278">Fertilization</keyword>
<keyword id="KW-0446">Lipid-binding</keyword>
<keyword id="KW-0472">Membrane</keyword>
<keyword id="KW-1185">Reference proteome</keyword>
<keyword id="KW-0732">Signal</keyword>
<keyword id="KW-0812">Transmembrane</keyword>
<keyword id="KW-1133">Transmembrane helix</keyword>
<feature type="signal peptide" evidence="3">
    <location>
        <begin position="1"/>
        <end position="33"/>
    </location>
</feature>
<feature type="chain" id="PRO_0000416782" description="Protein HAPLESS 2-B">
    <location>
        <begin position="34"/>
        <end position="714"/>
    </location>
</feature>
<feature type="topological domain" description="Extracellular" evidence="3">
    <location>
        <begin position="34"/>
        <end position="552"/>
    </location>
</feature>
<feature type="transmembrane region" description="Helical" evidence="3">
    <location>
        <begin position="553"/>
        <end position="573"/>
    </location>
</feature>
<feature type="topological domain" description="Cytoplasmic" evidence="3">
    <location>
        <begin position="574"/>
        <end position="714"/>
    </location>
</feature>
<feature type="region of interest" description="Disordered" evidence="4">
    <location>
        <begin position="597"/>
        <end position="619"/>
    </location>
</feature>
<feature type="compositionally biased region" description="Basic residues" evidence="4">
    <location>
        <begin position="598"/>
        <end position="619"/>
    </location>
</feature>
<feature type="disulfide bond" evidence="1">
    <location>
        <begin position="45"/>
        <end position="59"/>
    </location>
</feature>
<feature type="disulfide bond" evidence="1">
    <location>
        <begin position="134"/>
        <end position="164"/>
    </location>
</feature>
<feature type="disulfide bond" evidence="1">
    <location>
        <begin position="146"/>
        <end position="194"/>
    </location>
</feature>
<feature type="disulfide bond" evidence="1">
    <location>
        <begin position="165"/>
        <end position="321"/>
    </location>
</feature>
<feature type="disulfide bond" evidence="1">
    <location>
        <begin position="167"/>
        <end position="177"/>
    </location>
</feature>
<feature type="disulfide bond" evidence="1">
    <location>
        <begin position="304"/>
        <end position="328"/>
    </location>
</feature>
<feature type="disulfide bond" evidence="1">
    <location>
        <begin position="441"/>
        <end position="479"/>
    </location>
</feature>
<organism>
    <name type="scientific">Oryza sativa subsp. japonica</name>
    <name type="common">Rice</name>
    <dbReference type="NCBI Taxonomy" id="39947"/>
    <lineage>
        <taxon>Eukaryota</taxon>
        <taxon>Viridiplantae</taxon>
        <taxon>Streptophyta</taxon>
        <taxon>Embryophyta</taxon>
        <taxon>Tracheophyta</taxon>
        <taxon>Spermatophyta</taxon>
        <taxon>Magnoliopsida</taxon>
        <taxon>Liliopsida</taxon>
        <taxon>Poales</taxon>
        <taxon>Poaceae</taxon>
        <taxon>BOP clade</taxon>
        <taxon>Oryzoideae</taxon>
        <taxon>Oryzeae</taxon>
        <taxon>Oryzinae</taxon>
        <taxon>Oryza</taxon>
        <taxon>Oryza sativa</taxon>
    </lineage>
</organism>
<accession>B9G4M9</accession>
<accession>Q651M1</accession>
<reference key="1">
    <citation type="journal article" date="2005" name="Nature">
        <title>The map-based sequence of the rice genome.</title>
        <authorList>
            <consortium name="International rice genome sequencing project (IRGSP)"/>
        </authorList>
    </citation>
    <scope>NUCLEOTIDE SEQUENCE [LARGE SCALE GENOMIC DNA]</scope>
    <source>
        <strain>cv. Nipponbare</strain>
    </source>
</reference>
<reference key="2">
    <citation type="journal article" date="2008" name="Nucleic Acids Res.">
        <title>The rice annotation project database (RAP-DB): 2008 update.</title>
        <authorList>
            <consortium name="The rice annotation project (RAP)"/>
        </authorList>
    </citation>
    <scope>GENOME REANNOTATION</scope>
    <source>
        <strain>cv. Nipponbare</strain>
    </source>
</reference>
<reference key="3">
    <citation type="journal article" date="2013" name="Rice">
        <title>Improvement of the Oryza sativa Nipponbare reference genome using next generation sequence and optical map data.</title>
        <authorList>
            <person name="Kawahara Y."/>
            <person name="de la Bastide M."/>
            <person name="Hamilton J.P."/>
            <person name="Kanamori H."/>
            <person name="McCombie W.R."/>
            <person name="Ouyang S."/>
            <person name="Schwartz D.C."/>
            <person name="Tanaka T."/>
            <person name="Wu J."/>
            <person name="Zhou S."/>
            <person name="Childs K.L."/>
            <person name="Davidson R.M."/>
            <person name="Lin H."/>
            <person name="Quesada-Ocampo L."/>
            <person name="Vaillancourt B."/>
            <person name="Sakai H."/>
            <person name="Lee S.S."/>
            <person name="Kim J."/>
            <person name="Numa H."/>
            <person name="Itoh T."/>
            <person name="Buell C.R."/>
            <person name="Matsumoto T."/>
        </authorList>
    </citation>
    <scope>GENOME REANNOTATION</scope>
    <source>
        <strain>cv. Nipponbare</strain>
    </source>
</reference>
<reference key="4">
    <citation type="journal article" date="2005" name="PLoS Biol.">
        <title>The genomes of Oryza sativa: a history of duplications.</title>
        <authorList>
            <person name="Yu J."/>
            <person name="Wang J."/>
            <person name="Lin W."/>
            <person name="Li S."/>
            <person name="Li H."/>
            <person name="Zhou J."/>
            <person name="Ni P."/>
            <person name="Dong W."/>
            <person name="Hu S."/>
            <person name="Zeng C."/>
            <person name="Zhang J."/>
            <person name="Zhang Y."/>
            <person name="Li R."/>
            <person name="Xu Z."/>
            <person name="Li S."/>
            <person name="Li X."/>
            <person name="Zheng H."/>
            <person name="Cong L."/>
            <person name="Lin L."/>
            <person name="Yin J."/>
            <person name="Geng J."/>
            <person name="Li G."/>
            <person name="Shi J."/>
            <person name="Liu J."/>
            <person name="Lv H."/>
            <person name="Li J."/>
            <person name="Wang J."/>
            <person name="Deng Y."/>
            <person name="Ran L."/>
            <person name="Shi X."/>
            <person name="Wang X."/>
            <person name="Wu Q."/>
            <person name="Li C."/>
            <person name="Ren X."/>
            <person name="Wang J."/>
            <person name="Wang X."/>
            <person name="Li D."/>
            <person name="Liu D."/>
            <person name="Zhang X."/>
            <person name="Ji Z."/>
            <person name="Zhao W."/>
            <person name="Sun Y."/>
            <person name="Zhang Z."/>
            <person name="Bao J."/>
            <person name="Han Y."/>
            <person name="Dong L."/>
            <person name="Ji J."/>
            <person name="Chen P."/>
            <person name="Wu S."/>
            <person name="Liu J."/>
            <person name="Xiao Y."/>
            <person name="Bu D."/>
            <person name="Tan J."/>
            <person name="Yang L."/>
            <person name="Ye C."/>
            <person name="Zhang J."/>
            <person name="Xu J."/>
            <person name="Zhou Y."/>
            <person name="Yu Y."/>
            <person name="Zhang B."/>
            <person name="Zhuang S."/>
            <person name="Wei H."/>
            <person name="Liu B."/>
            <person name="Lei M."/>
            <person name="Yu H."/>
            <person name="Li Y."/>
            <person name="Xu H."/>
            <person name="Wei S."/>
            <person name="He X."/>
            <person name="Fang L."/>
            <person name="Zhang Z."/>
            <person name="Zhang Y."/>
            <person name="Huang X."/>
            <person name="Su Z."/>
            <person name="Tong W."/>
            <person name="Li J."/>
            <person name="Tong Z."/>
            <person name="Li S."/>
            <person name="Ye J."/>
            <person name="Wang L."/>
            <person name="Fang L."/>
            <person name="Lei T."/>
            <person name="Chen C.-S."/>
            <person name="Chen H.-C."/>
            <person name="Xu Z."/>
            <person name="Li H."/>
            <person name="Huang H."/>
            <person name="Zhang F."/>
            <person name="Xu H."/>
            <person name="Li N."/>
            <person name="Zhao C."/>
            <person name="Li S."/>
            <person name="Dong L."/>
            <person name="Huang Y."/>
            <person name="Li L."/>
            <person name="Xi Y."/>
            <person name="Qi Q."/>
            <person name="Li W."/>
            <person name="Zhang B."/>
            <person name="Hu W."/>
            <person name="Zhang Y."/>
            <person name="Tian X."/>
            <person name="Jiao Y."/>
            <person name="Liang X."/>
            <person name="Jin J."/>
            <person name="Gao L."/>
            <person name="Zheng W."/>
            <person name="Hao B."/>
            <person name="Liu S.-M."/>
            <person name="Wang W."/>
            <person name="Yuan L."/>
            <person name="Cao M."/>
            <person name="McDermott J."/>
            <person name="Samudrala R."/>
            <person name="Wang J."/>
            <person name="Wong G.K.-S."/>
            <person name="Yang H."/>
        </authorList>
    </citation>
    <scope>NUCLEOTIDE SEQUENCE [LARGE SCALE GENOMIC DNA]</scope>
    <source>
        <strain>cv. Nipponbare</strain>
    </source>
</reference>
<reference key="5">
    <citation type="journal article" date="2010" name="Trends Cell Biol.">
        <title>Is HAP2-GCS1 an ancestral gamete fusogen?</title>
        <authorList>
            <person name="Wong J.L."/>
            <person name="Johnson M.A."/>
        </authorList>
    </citation>
    <scope>REVIEW</scope>
</reference>
<name>HAP2B_ORYSJ</name>
<evidence type="ECO:0000250" key="1">
    <source>
        <dbReference type="UniProtKB" id="A4GRC6"/>
    </source>
</evidence>
<evidence type="ECO:0000250" key="2">
    <source>
        <dbReference type="UniProtKB" id="F4JP36"/>
    </source>
</evidence>
<evidence type="ECO:0000255" key="3"/>
<evidence type="ECO:0000256" key="4">
    <source>
        <dbReference type="SAM" id="MobiDB-lite"/>
    </source>
</evidence>
<evidence type="ECO:0000303" key="5">
    <source>
    </source>
</evidence>
<evidence type="ECO:0000305" key="6"/>
<proteinExistence type="inferred from homology"/>
<gene>
    <name type="primary">HAP2B</name>
    <name type="ordered locus">Os09g0525700</name>
    <name type="ordered locus">LOC_Os09g35720</name>
    <name type="ORF">OJ1439_F07.5</name>
    <name type="ORF">OsJ_30063</name>
    <name type="ORF">OSJNBa0047P18.33</name>
</gene>
<comment type="function">
    <text evidence="2">Required for male fertility. Plays a role in pollen tube guidance and successful gamete attachment. Essential for the fusion of gametes during double fertilization, where one male gamete fuses with the egg to produce a zygote, and another male gamete fuses with the central cell to produce the endosperm. Mediates the fusion of cell membranes. Not required for pollen tube outgrowth.</text>
</comment>
<comment type="subcellular location">
    <subcellularLocation>
        <location evidence="2">Endoplasmic reticulum membrane</location>
        <topology evidence="3">Single-pass membrane protein</topology>
    </subcellularLocation>
    <subcellularLocation>
        <location evidence="2">Cell membrane</location>
        <topology evidence="2">Single-pass type I membrane protein</topology>
    </subcellularLocation>
</comment>
<comment type="miscellaneous">
    <text evidence="5">HAP2/GCS1 family members mediate membrane fusion between gametes in a broad range of eukaryotes, ranging from algae and higher plants to protozoans and cnidaria, suggesting they are derived from an ancestral gamete fusogen. They function similar to viral fusogens, by inserting part of their extracellular domain into the lipid bilayer of an adjoining cell.</text>
</comment>
<comment type="similarity">
    <text evidence="6">Belongs to the HAP2/GCS1 family.</text>
</comment>
<comment type="sequence caution" evidence="6">
    <conflict type="erroneous gene model prediction">
        <sequence resource="EMBL-CDS" id="BAD46352"/>
    </conflict>
</comment>
<comment type="sequence caution" evidence="6">
    <conflict type="erroneous gene model prediction">
        <sequence resource="EMBL-CDS" id="BAD46496"/>
    </conflict>
</comment>
<comment type="sequence caution" evidence="6">
    <conflict type="erroneous gene model prediction">
        <sequence resource="EMBL-CDS" id="BAF25636"/>
    </conflict>
</comment>